<name>CXB5_HUMAN</name>
<comment type="function">
    <text>One gap junction consists of a cluster of closely packed pairs of transmembrane channels, the connexons, through which materials of low MW diffuse from one cell to a neighboring cell.</text>
</comment>
<comment type="subunit">
    <text>A connexon is composed of a hexamer of connexins.</text>
</comment>
<comment type="interaction">
    <interactant intactId="EBI-3909454">
        <id>O95377</id>
    </interactant>
    <interactant intactId="EBI-4290634">
        <id>Q9BQE5</id>
        <label>APOL2</label>
    </interactant>
    <organismsDiffer>false</organismsDiffer>
    <experiments>3</experiments>
</comment>
<comment type="interaction">
    <interactant intactId="EBI-3909454">
        <id>O95377</id>
    </interactant>
    <interactant intactId="EBI-11976321">
        <id>O95236-2</id>
        <label>APOL3</label>
    </interactant>
    <organismsDiffer>false</organismsDiffer>
    <experiments>3</experiments>
</comment>
<comment type="interaction">
    <interactant intactId="EBI-3909454">
        <id>O95377</id>
    </interactant>
    <interactant intactId="EBI-745213">
        <id>P29972</id>
        <label>AQP1</label>
    </interactant>
    <organismsDiffer>false</organismsDiffer>
    <experiments>3</experiments>
</comment>
<comment type="interaction">
    <interactant intactId="EBI-3909454">
        <id>O95377</id>
    </interactant>
    <interactant intactId="EBI-12003442">
        <id>Q8WVX3-2</id>
        <label>C4orf3</label>
    </interactant>
    <organismsDiffer>false</organismsDiffer>
    <experiments>3</experiments>
</comment>
<comment type="interaction">
    <interactant intactId="EBI-3909454">
        <id>O95377</id>
    </interactant>
    <interactant intactId="EBI-372265">
        <id>P21964</id>
        <label>COMT</label>
    </interactant>
    <organismsDiffer>false</organismsDiffer>
    <experiments>3</experiments>
</comment>
<comment type="interaction">
    <interactant intactId="EBI-3909454">
        <id>O95377</id>
    </interactant>
    <interactant intactId="EBI-12019274">
        <id>Q4LDR2</id>
        <label>CTXN3</label>
    </interactant>
    <organismsDiffer>false</organismsDiffer>
    <experiments>3</experiments>
</comment>
<comment type="interaction">
    <interactant intactId="EBI-3909454">
        <id>O95377</id>
    </interactant>
    <interactant intactId="EBI-1058710">
        <id>O43169</id>
        <label>CYB5B</label>
    </interactant>
    <organismsDiffer>false</organismsDiffer>
    <experiments>3</experiments>
</comment>
<comment type="interaction">
    <interactant intactId="EBI-3909454">
        <id>O95377</id>
    </interactant>
    <interactant intactId="EBI-711490">
        <id>Q9UKR5</id>
        <label>ERG28</label>
    </interactant>
    <organismsDiffer>false</organismsDiffer>
    <experiments>3</experiments>
</comment>
<comment type="interaction">
    <interactant intactId="EBI-3909454">
        <id>O95377</id>
    </interactant>
    <interactant intactId="EBI-2876774">
        <id>Q92520</id>
        <label>FAM3C</label>
    </interactant>
    <organismsDiffer>false</organismsDiffer>
    <experiments>3</experiments>
</comment>
<comment type="interaction">
    <interactant intactId="EBI-3909454">
        <id>O95377</id>
    </interactant>
    <interactant intactId="EBI-720480">
        <id>P24593</id>
        <label>IGFBP5</label>
    </interactant>
    <organismsDiffer>false</organismsDiffer>
    <experiments>3</experiments>
</comment>
<comment type="interaction">
    <interactant intactId="EBI-3909454">
        <id>O95377</id>
    </interactant>
    <interactant intactId="EBI-10266796">
        <id>Q8N5M9</id>
        <label>JAGN1</label>
    </interactant>
    <organismsDiffer>false</organismsDiffer>
    <experiments>3</experiments>
</comment>
<comment type="interaction">
    <interactant intactId="EBI-3909454">
        <id>O95377</id>
    </interactant>
    <interactant intactId="EBI-12033434">
        <id>Q9UBY5</id>
        <label>LPAR3</label>
    </interactant>
    <organismsDiffer>false</organismsDiffer>
    <experiments>3</experiments>
</comment>
<comment type="interaction">
    <interactant intactId="EBI-3909454">
        <id>O95377</id>
    </interactant>
    <interactant intactId="EBI-2830349">
        <id>Q7Z4F1</id>
        <label>LRP10</label>
    </interactant>
    <organismsDiffer>false</organismsDiffer>
    <experiments>3</experiments>
</comment>
<comment type="interaction">
    <interactant intactId="EBI-3909454">
        <id>O95377</id>
    </interactant>
    <interactant intactId="EBI-8449636">
        <id>P30301</id>
        <label>MIP</label>
    </interactant>
    <organismsDiffer>false</organismsDiffer>
    <experiments>3</experiments>
</comment>
<comment type="interaction">
    <interactant intactId="EBI-3909454">
        <id>O95377</id>
    </interactant>
    <interactant intactId="EBI-12070086">
        <id>Q5J8X5</id>
        <label>MS4A13</label>
    </interactant>
    <organismsDiffer>false</organismsDiffer>
    <experiments>3</experiments>
</comment>
<comment type="interaction">
    <interactant intactId="EBI-3909454">
        <id>O95377</id>
    </interactant>
    <interactant intactId="EBI-3921185">
        <id>Q9H115</id>
        <label>NAPB</label>
    </interactant>
    <organismsDiffer>false</organismsDiffer>
    <experiments>3</experiments>
</comment>
<comment type="interaction">
    <interactant intactId="EBI-3909454">
        <id>O95377</id>
    </interactant>
    <interactant intactId="EBI-12092917">
        <id>Q9UHJ9-5</id>
        <label>PGAP2</label>
    </interactant>
    <organismsDiffer>false</organismsDiffer>
    <experiments>3</experiments>
</comment>
<comment type="interaction">
    <interactant intactId="EBI-3909454">
        <id>O95377</id>
    </interactant>
    <interactant intactId="EBI-10485931">
        <id>Q5VZY2</id>
        <label>PLPP4</label>
    </interactant>
    <organismsDiffer>false</organismsDiffer>
    <experiments>3</experiments>
</comment>
<comment type="interaction">
    <interactant intactId="EBI-3909454">
        <id>O95377</id>
    </interactant>
    <interactant intactId="EBI-11721828">
        <id>Q8IY26</id>
        <label>PLPP6</label>
    </interactant>
    <organismsDiffer>false</organismsDiffer>
    <experiments>3</experiments>
</comment>
<comment type="interaction">
    <interactant intactId="EBI-3909454">
        <id>O95377</id>
    </interactant>
    <interactant intactId="EBI-8652812">
        <id>P54315</id>
        <label>PNLIPRP1</label>
    </interactant>
    <organismsDiffer>false</organismsDiffer>
    <experiments>3</experiments>
</comment>
<comment type="interaction">
    <interactant intactId="EBI-3909454">
        <id>O95377</id>
    </interactant>
    <interactant intactId="EBI-1052363">
        <id>Q9NS64</id>
        <label>RPRM</label>
    </interactant>
    <organismsDiffer>false</organismsDiffer>
    <experiments>3</experiments>
</comment>
<comment type="interaction">
    <interactant intactId="EBI-3909454">
        <id>O95377</id>
    </interactant>
    <interactant intactId="EBI-10244780">
        <id>Q5QGT7</id>
        <label>RTP2</label>
    </interactant>
    <organismsDiffer>false</organismsDiffer>
    <experiments>3</experiments>
</comment>
<comment type="interaction">
    <interactant intactId="EBI-3909454">
        <id>O95377</id>
    </interactant>
    <interactant intactId="EBI-8652744">
        <id>Q96IW7</id>
        <label>SEC22A</label>
    </interactant>
    <organismsDiffer>false</organismsDiffer>
    <experiments>3</experiments>
</comment>
<comment type="interaction">
    <interactant intactId="EBI-3909454">
        <id>O95377</id>
    </interactant>
    <interactant intactId="EBI-1058865">
        <id>O75396</id>
        <label>SEC22B</label>
    </interactant>
    <organismsDiffer>false</organismsDiffer>
    <experiments>3</experiments>
</comment>
<comment type="interaction">
    <interactant intactId="EBI-3909454">
        <id>O95377</id>
    </interactant>
    <interactant intactId="EBI-10329948">
        <id>Q9Y6X1</id>
        <label>SERP1</label>
    </interactant>
    <organismsDiffer>false</organismsDiffer>
    <experiments>3</experiments>
</comment>
<comment type="interaction">
    <interactant intactId="EBI-3909454">
        <id>O95377</id>
    </interactant>
    <interactant intactId="EBI-8644112">
        <id>Q9BRI3</id>
        <label>SLC30A2</label>
    </interactant>
    <organismsDiffer>false</organismsDiffer>
    <experiments>3</experiments>
</comment>
<comment type="interaction">
    <interactant intactId="EBI-3909454">
        <id>O95377</id>
    </interactant>
    <interactant intactId="EBI-10314552">
        <id>Q9NVC3</id>
        <label>SLC38A7</label>
    </interactant>
    <organismsDiffer>false</organismsDiffer>
    <experiments>3</experiments>
</comment>
<comment type="interaction">
    <interactant intactId="EBI-3909454">
        <id>O95377</id>
    </interactant>
    <interactant intactId="EBI-12266234">
        <id>Q8IVJ1</id>
        <label>SLC41A1</label>
    </interactant>
    <organismsDiffer>false</organismsDiffer>
    <experiments>3</experiments>
</comment>
<comment type="interaction">
    <interactant intactId="EBI-3909454">
        <id>O95377</id>
    </interactant>
    <interactant intactId="EBI-10290130">
        <id>Q96JW4</id>
        <label>SLC41A2</label>
    </interactant>
    <organismsDiffer>false</organismsDiffer>
    <experiments>3</experiments>
</comment>
<comment type="interaction">
    <interactant intactId="EBI-3909454">
        <id>O95377</id>
    </interactant>
    <interactant intactId="EBI-12188413">
        <id>B2RUZ4</id>
        <label>SMIM1</label>
    </interactant>
    <organismsDiffer>false</organismsDiffer>
    <experiments>3</experiments>
</comment>
<comment type="interaction">
    <interactant intactId="EBI-3909454">
        <id>O95377</id>
    </interactant>
    <interactant intactId="EBI-8650934">
        <id>P48230</id>
        <label>TM4SF4</label>
    </interactant>
    <organismsDiffer>false</organismsDiffer>
    <experiments>3</experiments>
</comment>
<comment type="interaction">
    <interactant intactId="EBI-3909454">
        <id>O95377</id>
    </interactant>
    <interactant intactId="EBI-10694905">
        <id>Q5BJH2-2</id>
        <label>TMEM128</label>
    </interactant>
    <organismsDiffer>false</organismsDiffer>
    <experiments>3</experiments>
</comment>
<comment type="interaction">
    <interactant intactId="EBI-3909454">
        <id>O95377</id>
    </interactant>
    <interactant intactId="EBI-2852148">
        <id>Q9H2L4</id>
        <label>TMEM60</label>
    </interactant>
    <organismsDiffer>false</organismsDiffer>
    <experiments>3</experiments>
</comment>
<comment type="interaction">
    <interactant intactId="EBI-3909454">
        <id>O95377</id>
    </interactant>
    <interactant intactId="EBI-12015604">
        <id>Q8N2M4</id>
        <label>TMEM86A</label>
    </interactant>
    <organismsDiffer>false</organismsDiffer>
    <experiments>3</experiments>
</comment>
<comment type="interaction">
    <interactant intactId="EBI-3909454">
        <id>O95377</id>
    </interactant>
    <interactant intactId="EBI-12111910">
        <id>Q5BJF2</id>
        <label>TMEM97</label>
    </interactant>
    <organismsDiffer>false</organismsDiffer>
    <experiments>3</experiments>
</comment>
<comment type="interaction">
    <interactant intactId="EBI-3909454">
        <id>O95377</id>
    </interactant>
    <interactant intactId="EBI-12195249">
        <id>Q5TGU0</id>
        <label>TSPO2</label>
    </interactant>
    <organismsDiffer>false</organismsDiffer>
    <experiments>3</experiments>
</comment>
<comment type="interaction">
    <interactant intactId="EBI-3909454">
        <id>O95377</id>
    </interactant>
    <interactant intactId="EBI-12190699">
        <id>Q6UX27-3</id>
        <label>VSTM1</label>
    </interactant>
    <organismsDiffer>false</organismsDiffer>
    <experiments>3</experiments>
</comment>
<comment type="subcellular location">
    <subcellularLocation>
        <location>Cell membrane</location>
        <topology>Multi-pass membrane protein</topology>
    </subcellularLocation>
    <subcellularLocation>
        <location>Cell junction</location>
        <location>Gap junction</location>
    </subcellularLocation>
</comment>
<comment type="similarity">
    <text evidence="2">Belongs to the connexin family. Beta-type (group I) subfamily.</text>
</comment>
<feature type="chain" id="PRO_0000057868" description="Gap junction beta-5 protein">
    <location>
        <begin position="1"/>
        <end position="273"/>
    </location>
</feature>
<feature type="topological domain" description="Cytoplasmic" evidence="1">
    <location>
        <begin position="1"/>
        <end position="20"/>
    </location>
</feature>
<feature type="transmembrane region" description="Helical" evidence="1">
    <location>
        <begin position="21"/>
        <end position="40"/>
    </location>
</feature>
<feature type="topological domain" description="Extracellular" evidence="1">
    <location>
        <begin position="41"/>
        <end position="75"/>
    </location>
</feature>
<feature type="transmembrane region" description="Helical" evidence="1">
    <location>
        <begin position="76"/>
        <end position="98"/>
    </location>
</feature>
<feature type="topological domain" description="Cytoplasmic" evidence="1">
    <location>
        <begin position="99"/>
        <end position="126"/>
    </location>
</feature>
<feature type="transmembrane region" description="Helical" evidence="1">
    <location>
        <begin position="127"/>
        <end position="149"/>
    </location>
</feature>
<feature type="topological domain" description="Extracellular" evidence="1">
    <location>
        <begin position="150"/>
        <end position="187"/>
    </location>
</feature>
<feature type="transmembrane region" description="Helical" evidence="1">
    <location>
        <begin position="188"/>
        <end position="210"/>
    </location>
</feature>
<feature type="topological domain" description="Cytoplasmic" evidence="1">
    <location>
        <begin position="211"/>
        <end position="273"/>
    </location>
</feature>
<proteinExistence type="evidence at protein level"/>
<dbReference type="EMBL" id="AF099731">
    <property type="protein sequence ID" value="AAC95472.1"/>
    <property type="molecule type" value="Genomic_DNA"/>
</dbReference>
<dbReference type="EMBL" id="AF052693">
    <property type="protein sequence ID" value="AAD18005.1"/>
    <property type="molecule type" value="mRNA"/>
</dbReference>
<dbReference type="EMBL" id="AL121988">
    <property type="status" value="NOT_ANNOTATED_CDS"/>
    <property type="molecule type" value="Genomic_DNA"/>
</dbReference>
<dbReference type="EMBL" id="BC004379">
    <property type="protein sequence ID" value="AAH04379.1"/>
    <property type="molecule type" value="mRNA"/>
</dbReference>
<dbReference type="CCDS" id="CCDS382.1"/>
<dbReference type="RefSeq" id="NP_005259.1">
    <property type="nucleotide sequence ID" value="NM_005268.4"/>
</dbReference>
<dbReference type="RefSeq" id="XP_005270808.1">
    <property type="nucleotide sequence ID" value="XM_005270751.4"/>
</dbReference>
<dbReference type="RefSeq" id="XP_054191979.1">
    <property type="nucleotide sequence ID" value="XM_054336004.1"/>
</dbReference>
<dbReference type="SMR" id="O95377"/>
<dbReference type="BioGRID" id="108974">
    <property type="interactions" value="74"/>
</dbReference>
<dbReference type="FunCoup" id="O95377">
    <property type="interactions" value="16"/>
</dbReference>
<dbReference type="IntAct" id="O95377">
    <property type="interactions" value="69"/>
</dbReference>
<dbReference type="MINT" id="O95377"/>
<dbReference type="STRING" id="9606.ENSP00000340811"/>
<dbReference type="iPTMnet" id="O95377"/>
<dbReference type="PhosphoSitePlus" id="O95377"/>
<dbReference type="BioMuta" id="GJB5"/>
<dbReference type="MassIVE" id="O95377"/>
<dbReference type="PaxDb" id="9606-ENSP00000340811"/>
<dbReference type="PeptideAtlas" id="O95377"/>
<dbReference type="ProteomicsDB" id="50830"/>
<dbReference type="Antibodypedia" id="31495">
    <property type="antibodies" value="156 antibodies from 25 providers"/>
</dbReference>
<dbReference type="DNASU" id="2709"/>
<dbReference type="Ensembl" id="ENST00000338513.1">
    <property type="protein sequence ID" value="ENSP00000340811.1"/>
    <property type="gene ID" value="ENSG00000189280.3"/>
</dbReference>
<dbReference type="GeneID" id="2709"/>
<dbReference type="KEGG" id="hsa:2709"/>
<dbReference type="MANE-Select" id="ENST00000338513.1">
    <property type="protein sequence ID" value="ENSP00000340811.1"/>
    <property type="RefSeq nucleotide sequence ID" value="NM_005268.4"/>
    <property type="RefSeq protein sequence ID" value="NP_005259.1"/>
</dbReference>
<dbReference type="UCSC" id="uc001bxu.4">
    <property type="organism name" value="human"/>
</dbReference>
<dbReference type="AGR" id="HGNC:4287"/>
<dbReference type="CTD" id="2709"/>
<dbReference type="DisGeNET" id="2709"/>
<dbReference type="GeneCards" id="GJB5"/>
<dbReference type="HGNC" id="HGNC:4287">
    <property type="gene designation" value="GJB5"/>
</dbReference>
<dbReference type="HPA" id="ENSG00000189280">
    <property type="expression patterns" value="Group enriched (esophagus, skin, vagina)"/>
</dbReference>
<dbReference type="MIM" id="604493">
    <property type="type" value="gene"/>
</dbReference>
<dbReference type="neXtProt" id="NX_O95377"/>
<dbReference type="OpenTargets" id="ENSG00000189280"/>
<dbReference type="PharmGKB" id="PA28698"/>
<dbReference type="VEuPathDB" id="HostDB:ENSG00000189280"/>
<dbReference type="eggNOG" id="ENOG502R3YE">
    <property type="taxonomic scope" value="Eukaryota"/>
</dbReference>
<dbReference type="GeneTree" id="ENSGT01030000234513"/>
<dbReference type="HOGENOM" id="CLU_037388_4_1_1"/>
<dbReference type="InParanoid" id="O95377"/>
<dbReference type="OMA" id="NWSIFEG"/>
<dbReference type="OrthoDB" id="9441654at2759"/>
<dbReference type="PAN-GO" id="O95377">
    <property type="GO annotations" value="3 GO annotations based on evolutionary models"/>
</dbReference>
<dbReference type="PhylomeDB" id="O95377"/>
<dbReference type="TreeFam" id="TF329606"/>
<dbReference type="PathwayCommons" id="O95377"/>
<dbReference type="Reactome" id="R-HSA-190861">
    <property type="pathway name" value="Gap junction assembly"/>
</dbReference>
<dbReference type="SignaLink" id="O95377"/>
<dbReference type="BioGRID-ORCS" id="2709">
    <property type="hits" value="11 hits in 1141 CRISPR screens"/>
</dbReference>
<dbReference type="GeneWiki" id="GJB5"/>
<dbReference type="GenomeRNAi" id="2709"/>
<dbReference type="Pharos" id="O95377">
    <property type="development level" value="Tbio"/>
</dbReference>
<dbReference type="PRO" id="PR:O95377"/>
<dbReference type="Proteomes" id="UP000005640">
    <property type="component" value="Chromosome 1"/>
</dbReference>
<dbReference type="RNAct" id="O95377">
    <property type="molecule type" value="protein"/>
</dbReference>
<dbReference type="Bgee" id="ENSG00000189280">
    <property type="expression patterns" value="Expressed in lower esophagus mucosa and 107 other cell types or tissues"/>
</dbReference>
<dbReference type="ExpressionAtlas" id="O95377">
    <property type="expression patterns" value="baseline and differential"/>
</dbReference>
<dbReference type="GO" id="GO:0005922">
    <property type="term" value="C:connexin complex"/>
    <property type="evidence" value="ECO:0000318"/>
    <property type="project" value="GO_Central"/>
</dbReference>
<dbReference type="GO" id="GO:0005243">
    <property type="term" value="F:gap junction channel activity"/>
    <property type="evidence" value="ECO:0000318"/>
    <property type="project" value="GO_Central"/>
</dbReference>
<dbReference type="GO" id="GO:0007267">
    <property type="term" value="P:cell-cell signaling"/>
    <property type="evidence" value="ECO:0000318"/>
    <property type="project" value="GO_Central"/>
</dbReference>
<dbReference type="GO" id="GO:0008544">
    <property type="term" value="P:epidermis development"/>
    <property type="evidence" value="ECO:0000304"/>
    <property type="project" value="ProtInc"/>
</dbReference>
<dbReference type="GO" id="GO:0060713">
    <property type="term" value="P:labyrinthine layer morphogenesis"/>
    <property type="evidence" value="ECO:0007669"/>
    <property type="project" value="Ensembl"/>
</dbReference>
<dbReference type="GO" id="GO:0060707">
    <property type="term" value="P:trophoblast giant cell differentiation"/>
    <property type="evidence" value="ECO:0007669"/>
    <property type="project" value="Ensembl"/>
</dbReference>
<dbReference type="FunFam" id="1.20.1440.80:FF:000001">
    <property type="entry name" value="Gap junction alpha-1"/>
    <property type="match status" value="1"/>
</dbReference>
<dbReference type="Gene3D" id="1.20.1440.80">
    <property type="entry name" value="Gap junction channel protein cysteine-rich domain"/>
    <property type="match status" value="1"/>
</dbReference>
<dbReference type="InterPro" id="IPR000500">
    <property type="entry name" value="Connexin"/>
</dbReference>
<dbReference type="InterPro" id="IPR002271">
    <property type="entry name" value="Connexin311"/>
</dbReference>
<dbReference type="InterPro" id="IPR019570">
    <property type="entry name" value="Connexin_CCC"/>
</dbReference>
<dbReference type="InterPro" id="IPR017990">
    <property type="entry name" value="Connexin_CS"/>
</dbReference>
<dbReference type="InterPro" id="IPR013092">
    <property type="entry name" value="Connexin_N"/>
</dbReference>
<dbReference type="InterPro" id="IPR038359">
    <property type="entry name" value="Connexin_N_sf"/>
</dbReference>
<dbReference type="PANTHER" id="PTHR11984">
    <property type="entry name" value="CONNEXIN"/>
    <property type="match status" value="1"/>
</dbReference>
<dbReference type="PANTHER" id="PTHR11984:SF29">
    <property type="entry name" value="GAP JUNCTION BETA-5 PROTEIN"/>
    <property type="match status" value="1"/>
</dbReference>
<dbReference type="Pfam" id="PF00029">
    <property type="entry name" value="Connexin"/>
    <property type="match status" value="1"/>
</dbReference>
<dbReference type="PRINTS" id="PR00206">
    <property type="entry name" value="CONNEXIN"/>
</dbReference>
<dbReference type="PRINTS" id="PR01141">
    <property type="entry name" value="CONNEXINB4"/>
</dbReference>
<dbReference type="SMART" id="SM00037">
    <property type="entry name" value="CNX"/>
    <property type="match status" value="1"/>
</dbReference>
<dbReference type="SMART" id="SM01089">
    <property type="entry name" value="Connexin_CCC"/>
    <property type="match status" value="1"/>
</dbReference>
<dbReference type="PROSITE" id="PS00407">
    <property type="entry name" value="CONNEXINS_1"/>
    <property type="match status" value="1"/>
</dbReference>
<dbReference type="PROSITE" id="PS00408">
    <property type="entry name" value="CONNEXINS_2"/>
    <property type="match status" value="1"/>
</dbReference>
<gene>
    <name type="primary">GJB5</name>
</gene>
<evidence type="ECO:0000255" key="1"/>
<evidence type="ECO:0000305" key="2"/>
<keyword id="KW-0965">Cell junction</keyword>
<keyword id="KW-1003">Cell membrane</keyword>
<keyword id="KW-0303">Gap junction</keyword>
<keyword id="KW-0472">Membrane</keyword>
<keyword id="KW-1267">Proteomics identification</keyword>
<keyword id="KW-1185">Reference proteome</keyword>
<keyword id="KW-0812">Transmembrane</keyword>
<keyword id="KW-1133">Transmembrane helix</keyword>
<reference key="1">
    <citation type="journal article" date="1998" name="Nat. Genet.">
        <title>Mutations in the human connexin gene GJB3 cause erythrokeratodermia variabilis.</title>
        <authorList>
            <person name="Richard G."/>
            <person name="Smith L.E."/>
            <person name="Bailey R.A."/>
            <person name="Itin P."/>
            <person name="Hohl D."/>
            <person name="Epstein E.H. Jr."/>
            <person name="DiGiovanna J.J."/>
            <person name="Compton J.G."/>
            <person name="Bale S.J."/>
        </authorList>
    </citation>
    <scope>NUCLEOTIDE SEQUENCE [GENOMIC DNA]</scope>
</reference>
<reference key="2">
    <citation type="submission" date="1999-03" db="EMBL/GenBank/DDBJ databases">
        <title>Molecular cloning of human connexin 31 and 31.1.</title>
        <authorList>
            <person name="Xia J.-H."/>
            <person name="Liu C.-Y."/>
            <person name="Zheng D."/>
            <person name="Pan Q."/>
            <person name="Xie W."/>
        </authorList>
    </citation>
    <scope>NUCLEOTIDE SEQUENCE [MRNA]</scope>
</reference>
<reference key="3">
    <citation type="journal article" date="2006" name="Nature">
        <title>The DNA sequence and biological annotation of human chromosome 1.</title>
        <authorList>
            <person name="Gregory S.G."/>
            <person name="Barlow K.F."/>
            <person name="McLay K.E."/>
            <person name="Kaul R."/>
            <person name="Swarbreck D."/>
            <person name="Dunham A."/>
            <person name="Scott C.E."/>
            <person name="Howe K.L."/>
            <person name="Woodfine K."/>
            <person name="Spencer C.C.A."/>
            <person name="Jones M.C."/>
            <person name="Gillson C."/>
            <person name="Searle S."/>
            <person name="Zhou Y."/>
            <person name="Kokocinski F."/>
            <person name="McDonald L."/>
            <person name="Evans R."/>
            <person name="Phillips K."/>
            <person name="Atkinson A."/>
            <person name="Cooper R."/>
            <person name="Jones C."/>
            <person name="Hall R.E."/>
            <person name="Andrews T.D."/>
            <person name="Lloyd C."/>
            <person name="Ainscough R."/>
            <person name="Almeida J.P."/>
            <person name="Ambrose K.D."/>
            <person name="Anderson F."/>
            <person name="Andrew R.W."/>
            <person name="Ashwell R.I.S."/>
            <person name="Aubin K."/>
            <person name="Babbage A.K."/>
            <person name="Bagguley C.L."/>
            <person name="Bailey J."/>
            <person name="Beasley H."/>
            <person name="Bethel G."/>
            <person name="Bird C.P."/>
            <person name="Bray-Allen S."/>
            <person name="Brown J.Y."/>
            <person name="Brown A.J."/>
            <person name="Buckley D."/>
            <person name="Burton J."/>
            <person name="Bye J."/>
            <person name="Carder C."/>
            <person name="Chapman J.C."/>
            <person name="Clark S.Y."/>
            <person name="Clarke G."/>
            <person name="Clee C."/>
            <person name="Cobley V."/>
            <person name="Collier R.E."/>
            <person name="Corby N."/>
            <person name="Coville G.J."/>
            <person name="Davies J."/>
            <person name="Deadman R."/>
            <person name="Dunn M."/>
            <person name="Earthrowl M."/>
            <person name="Ellington A.G."/>
            <person name="Errington H."/>
            <person name="Frankish A."/>
            <person name="Frankland J."/>
            <person name="French L."/>
            <person name="Garner P."/>
            <person name="Garnett J."/>
            <person name="Gay L."/>
            <person name="Ghori M.R.J."/>
            <person name="Gibson R."/>
            <person name="Gilby L.M."/>
            <person name="Gillett W."/>
            <person name="Glithero R.J."/>
            <person name="Grafham D.V."/>
            <person name="Griffiths C."/>
            <person name="Griffiths-Jones S."/>
            <person name="Grocock R."/>
            <person name="Hammond S."/>
            <person name="Harrison E.S.I."/>
            <person name="Hart E."/>
            <person name="Haugen E."/>
            <person name="Heath P.D."/>
            <person name="Holmes S."/>
            <person name="Holt K."/>
            <person name="Howden P.J."/>
            <person name="Hunt A.R."/>
            <person name="Hunt S.E."/>
            <person name="Hunter G."/>
            <person name="Isherwood J."/>
            <person name="James R."/>
            <person name="Johnson C."/>
            <person name="Johnson D."/>
            <person name="Joy A."/>
            <person name="Kay M."/>
            <person name="Kershaw J.K."/>
            <person name="Kibukawa M."/>
            <person name="Kimberley A.M."/>
            <person name="King A."/>
            <person name="Knights A.J."/>
            <person name="Lad H."/>
            <person name="Laird G."/>
            <person name="Lawlor S."/>
            <person name="Leongamornlert D.A."/>
            <person name="Lloyd D.M."/>
            <person name="Loveland J."/>
            <person name="Lovell J."/>
            <person name="Lush M.J."/>
            <person name="Lyne R."/>
            <person name="Martin S."/>
            <person name="Mashreghi-Mohammadi M."/>
            <person name="Matthews L."/>
            <person name="Matthews N.S.W."/>
            <person name="McLaren S."/>
            <person name="Milne S."/>
            <person name="Mistry S."/>
            <person name="Moore M.J.F."/>
            <person name="Nickerson T."/>
            <person name="O'Dell C.N."/>
            <person name="Oliver K."/>
            <person name="Palmeiri A."/>
            <person name="Palmer S.A."/>
            <person name="Parker A."/>
            <person name="Patel D."/>
            <person name="Pearce A.V."/>
            <person name="Peck A.I."/>
            <person name="Pelan S."/>
            <person name="Phelps K."/>
            <person name="Phillimore B.J."/>
            <person name="Plumb R."/>
            <person name="Rajan J."/>
            <person name="Raymond C."/>
            <person name="Rouse G."/>
            <person name="Saenphimmachak C."/>
            <person name="Sehra H.K."/>
            <person name="Sheridan E."/>
            <person name="Shownkeen R."/>
            <person name="Sims S."/>
            <person name="Skuce C.D."/>
            <person name="Smith M."/>
            <person name="Steward C."/>
            <person name="Subramanian S."/>
            <person name="Sycamore N."/>
            <person name="Tracey A."/>
            <person name="Tromans A."/>
            <person name="Van Helmond Z."/>
            <person name="Wall M."/>
            <person name="Wallis J.M."/>
            <person name="White S."/>
            <person name="Whitehead S.L."/>
            <person name="Wilkinson J.E."/>
            <person name="Willey D.L."/>
            <person name="Williams H."/>
            <person name="Wilming L."/>
            <person name="Wray P.W."/>
            <person name="Wu Z."/>
            <person name="Coulson A."/>
            <person name="Vaudin M."/>
            <person name="Sulston J.E."/>
            <person name="Durbin R.M."/>
            <person name="Hubbard T."/>
            <person name="Wooster R."/>
            <person name="Dunham I."/>
            <person name="Carter N.P."/>
            <person name="McVean G."/>
            <person name="Ross M.T."/>
            <person name="Harrow J."/>
            <person name="Olson M.V."/>
            <person name="Beck S."/>
            <person name="Rogers J."/>
            <person name="Bentley D.R."/>
        </authorList>
    </citation>
    <scope>NUCLEOTIDE SEQUENCE [LARGE SCALE GENOMIC DNA]</scope>
</reference>
<reference key="4">
    <citation type="journal article" date="2004" name="Genome Res.">
        <title>The status, quality, and expansion of the NIH full-length cDNA project: the Mammalian Gene Collection (MGC).</title>
        <authorList>
            <consortium name="The MGC Project Team"/>
        </authorList>
    </citation>
    <scope>NUCLEOTIDE SEQUENCE [LARGE SCALE MRNA]</scope>
    <source>
        <tissue>Pancreas</tissue>
    </source>
</reference>
<protein>
    <recommendedName>
        <fullName>Gap junction beta-5 protein</fullName>
    </recommendedName>
    <alternativeName>
        <fullName>Connexin-31.1</fullName>
        <shortName>Cx31.1</shortName>
    </alternativeName>
</protein>
<sequence>MNWSIFEGLLSGVNKYSTAFGRIWLSLVFIFRVLVYLVTAERVWSDDHKDFDCNTRQPGCSNVCFDEFFPVSHVRLWALQLILVTCPSLLVVMHVAYREVQEKRHREAHGENSGRLYLNPGKKRGGLWWTYVCSLVFKASVDIAFLYVFHSFYPKYILPPVVKCHADPCPNIVDCFISKPSEKNIFTLFMVATAAICILLNLVELIYLVSKRCHECLAARKAQAMCTGHHPHGTTSSCKQDDLLSGDLIFLGSDSHPPLLPDRPRDHVKKTIL</sequence>
<accession>O95377</accession>
<accession>Q9UPA3</accession>
<organism>
    <name type="scientific">Homo sapiens</name>
    <name type="common">Human</name>
    <dbReference type="NCBI Taxonomy" id="9606"/>
    <lineage>
        <taxon>Eukaryota</taxon>
        <taxon>Metazoa</taxon>
        <taxon>Chordata</taxon>
        <taxon>Craniata</taxon>
        <taxon>Vertebrata</taxon>
        <taxon>Euteleostomi</taxon>
        <taxon>Mammalia</taxon>
        <taxon>Eutheria</taxon>
        <taxon>Euarchontoglires</taxon>
        <taxon>Primates</taxon>
        <taxon>Haplorrhini</taxon>
        <taxon>Catarrhini</taxon>
        <taxon>Hominidae</taxon>
        <taxon>Homo</taxon>
    </lineage>
</organism>